<proteinExistence type="inferred from homology"/>
<protein>
    <recommendedName>
        <fullName evidence="2">Small ribosomal subunit protein uS19</fullName>
    </recommendedName>
    <alternativeName>
        <fullName>30S ribosomal protein S19</fullName>
    </alternativeName>
</protein>
<name>RS19_CHLPN</name>
<dbReference type="EMBL" id="AE001363">
    <property type="protein sequence ID" value="AAD18782.1"/>
    <property type="molecule type" value="Genomic_DNA"/>
</dbReference>
<dbReference type="EMBL" id="AE002161">
    <property type="protein sequence ID" value="AAF73629.1"/>
    <property type="molecule type" value="Genomic_DNA"/>
</dbReference>
<dbReference type="EMBL" id="BA000008">
    <property type="protein sequence ID" value="BAA98850.1"/>
    <property type="molecule type" value="Genomic_DNA"/>
</dbReference>
<dbReference type="EMBL" id="AE009440">
    <property type="protein sequence ID" value="AAP98598.1"/>
    <property type="molecule type" value="Genomic_DNA"/>
</dbReference>
<dbReference type="PIR" id="E72055">
    <property type="entry name" value="E72055"/>
</dbReference>
<dbReference type="PIR" id="H86570">
    <property type="entry name" value="H86570"/>
</dbReference>
<dbReference type="RefSeq" id="NP_224839.1">
    <property type="nucleotide sequence ID" value="NC_000922.1"/>
</dbReference>
<dbReference type="RefSeq" id="WP_010883281.1">
    <property type="nucleotide sequence ID" value="NZ_LN847257.1"/>
</dbReference>
<dbReference type="RefSeq" id="WP_010891970.1">
    <property type="nucleotide sequence ID" value="NZ_LN846995.1"/>
</dbReference>
<dbReference type="SMR" id="Q9Z7R1"/>
<dbReference type="STRING" id="406984.CPK_ORF00043"/>
<dbReference type="GeneID" id="45050693"/>
<dbReference type="KEGG" id="cpa:CP_0104"/>
<dbReference type="KEGG" id="cpj:rs19"/>
<dbReference type="KEGG" id="cpn:CPn_0643"/>
<dbReference type="KEGG" id="cpt:CpB0669"/>
<dbReference type="PATRIC" id="fig|115713.3.peg.713"/>
<dbReference type="eggNOG" id="COG0185">
    <property type="taxonomic scope" value="Bacteria"/>
</dbReference>
<dbReference type="HOGENOM" id="CLU_144911_0_1_0"/>
<dbReference type="OMA" id="KGPFVDP"/>
<dbReference type="OrthoDB" id="9797833at2"/>
<dbReference type="Proteomes" id="UP000000583">
    <property type="component" value="Chromosome"/>
</dbReference>
<dbReference type="Proteomes" id="UP000000801">
    <property type="component" value="Chromosome"/>
</dbReference>
<dbReference type="GO" id="GO:0005737">
    <property type="term" value="C:cytoplasm"/>
    <property type="evidence" value="ECO:0007669"/>
    <property type="project" value="UniProtKB-ARBA"/>
</dbReference>
<dbReference type="GO" id="GO:0015935">
    <property type="term" value="C:small ribosomal subunit"/>
    <property type="evidence" value="ECO:0007669"/>
    <property type="project" value="InterPro"/>
</dbReference>
<dbReference type="GO" id="GO:0019843">
    <property type="term" value="F:rRNA binding"/>
    <property type="evidence" value="ECO:0007669"/>
    <property type="project" value="UniProtKB-UniRule"/>
</dbReference>
<dbReference type="GO" id="GO:0003735">
    <property type="term" value="F:structural constituent of ribosome"/>
    <property type="evidence" value="ECO:0007669"/>
    <property type="project" value="InterPro"/>
</dbReference>
<dbReference type="GO" id="GO:0000028">
    <property type="term" value="P:ribosomal small subunit assembly"/>
    <property type="evidence" value="ECO:0007669"/>
    <property type="project" value="TreeGrafter"/>
</dbReference>
<dbReference type="GO" id="GO:0006412">
    <property type="term" value="P:translation"/>
    <property type="evidence" value="ECO:0007669"/>
    <property type="project" value="UniProtKB-UniRule"/>
</dbReference>
<dbReference type="FunFam" id="3.30.860.10:FF:000001">
    <property type="entry name" value="30S ribosomal protein S19"/>
    <property type="match status" value="1"/>
</dbReference>
<dbReference type="Gene3D" id="3.30.860.10">
    <property type="entry name" value="30s Ribosomal Protein S19, Chain A"/>
    <property type="match status" value="1"/>
</dbReference>
<dbReference type="HAMAP" id="MF_00531">
    <property type="entry name" value="Ribosomal_uS19"/>
    <property type="match status" value="1"/>
</dbReference>
<dbReference type="InterPro" id="IPR002222">
    <property type="entry name" value="Ribosomal_uS19"/>
</dbReference>
<dbReference type="InterPro" id="IPR005732">
    <property type="entry name" value="Ribosomal_uS19_bac-type"/>
</dbReference>
<dbReference type="InterPro" id="IPR020934">
    <property type="entry name" value="Ribosomal_uS19_CS"/>
</dbReference>
<dbReference type="InterPro" id="IPR023575">
    <property type="entry name" value="Ribosomal_uS19_SF"/>
</dbReference>
<dbReference type="NCBIfam" id="TIGR01050">
    <property type="entry name" value="rpsS_bact"/>
    <property type="match status" value="1"/>
</dbReference>
<dbReference type="PANTHER" id="PTHR11880">
    <property type="entry name" value="RIBOSOMAL PROTEIN S19P FAMILY MEMBER"/>
    <property type="match status" value="1"/>
</dbReference>
<dbReference type="PANTHER" id="PTHR11880:SF8">
    <property type="entry name" value="SMALL RIBOSOMAL SUBUNIT PROTEIN US19M"/>
    <property type="match status" value="1"/>
</dbReference>
<dbReference type="Pfam" id="PF00203">
    <property type="entry name" value="Ribosomal_S19"/>
    <property type="match status" value="1"/>
</dbReference>
<dbReference type="PIRSF" id="PIRSF002144">
    <property type="entry name" value="Ribosomal_S19"/>
    <property type="match status" value="1"/>
</dbReference>
<dbReference type="PRINTS" id="PR00975">
    <property type="entry name" value="RIBOSOMALS19"/>
</dbReference>
<dbReference type="SUPFAM" id="SSF54570">
    <property type="entry name" value="Ribosomal protein S19"/>
    <property type="match status" value="1"/>
</dbReference>
<dbReference type="PROSITE" id="PS00323">
    <property type="entry name" value="RIBOSOMAL_S19"/>
    <property type="match status" value="1"/>
</dbReference>
<feature type="chain" id="PRO_0000129803" description="Small ribosomal subunit protein uS19">
    <location>
        <begin position="1"/>
        <end position="88"/>
    </location>
</feature>
<feature type="sequence conflict" description="In Ref. 1; AAD18782." evidence="2" ref="1">
    <original>S</original>
    <variation>G</variation>
    <location>
        <position position="2"/>
    </location>
</feature>
<reference key="1">
    <citation type="journal article" date="1999" name="Nat. Genet.">
        <title>Comparative genomes of Chlamydia pneumoniae and C. trachomatis.</title>
        <authorList>
            <person name="Kalman S."/>
            <person name="Mitchell W.P."/>
            <person name="Marathe R."/>
            <person name="Lammel C.J."/>
            <person name="Fan J."/>
            <person name="Hyman R.W."/>
            <person name="Olinger L."/>
            <person name="Grimwood J."/>
            <person name="Davis R.W."/>
            <person name="Stephens R.S."/>
        </authorList>
    </citation>
    <scope>NUCLEOTIDE SEQUENCE [LARGE SCALE GENOMIC DNA]</scope>
    <source>
        <strain>CWL029</strain>
    </source>
</reference>
<reference key="2">
    <citation type="journal article" date="2000" name="Nucleic Acids Res.">
        <title>Genome sequences of Chlamydia trachomatis MoPn and Chlamydia pneumoniae AR39.</title>
        <authorList>
            <person name="Read T.D."/>
            <person name="Brunham R.C."/>
            <person name="Shen C."/>
            <person name="Gill S.R."/>
            <person name="Heidelberg J.F."/>
            <person name="White O."/>
            <person name="Hickey E.K."/>
            <person name="Peterson J.D."/>
            <person name="Utterback T.R."/>
            <person name="Berry K.J."/>
            <person name="Bass S."/>
            <person name="Linher K.D."/>
            <person name="Weidman J.F."/>
            <person name="Khouri H.M."/>
            <person name="Craven B."/>
            <person name="Bowman C."/>
            <person name="Dodson R.J."/>
            <person name="Gwinn M.L."/>
            <person name="Nelson W.C."/>
            <person name="DeBoy R.T."/>
            <person name="Kolonay J.F."/>
            <person name="McClarty G."/>
            <person name="Salzberg S.L."/>
            <person name="Eisen J.A."/>
            <person name="Fraser C.M."/>
        </authorList>
    </citation>
    <scope>NUCLEOTIDE SEQUENCE [LARGE SCALE GENOMIC DNA]</scope>
    <source>
        <strain>AR39</strain>
    </source>
</reference>
<reference key="3">
    <citation type="journal article" date="2000" name="Nucleic Acids Res.">
        <title>Comparison of whole genome sequences of Chlamydia pneumoniae J138 from Japan and CWL029 from USA.</title>
        <authorList>
            <person name="Shirai M."/>
            <person name="Hirakawa H."/>
            <person name="Kimoto M."/>
            <person name="Tabuchi M."/>
            <person name="Kishi F."/>
            <person name="Ouchi K."/>
            <person name="Shiba T."/>
            <person name="Ishii K."/>
            <person name="Hattori M."/>
            <person name="Kuhara S."/>
            <person name="Nakazawa T."/>
        </authorList>
    </citation>
    <scope>NUCLEOTIDE SEQUENCE [LARGE SCALE GENOMIC DNA]</scope>
    <source>
        <strain>J138</strain>
    </source>
</reference>
<reference key="4">
    <citation type="submission" date="2002-05" db="EMBL/GenBank/DDBJ databases">
        <title>The genome sequence of Chlamydia pneumoniae TW183 and comparison with other Chlamydia strains based on whole genome sequence analysis.</title>
        <authorList>
            <person name="Geng M.M."/>
            <person name="Schuhmacher A."/>
            <person name="Muehldorfer I."/>
            <person name="Bensch K.W."/>
            <person name="Schaefer K.P."/>
            <person name="Schneider S."/>
            <person name="Pohl T."/>
            <person name="Essig A."/>
            <person name="Marre R."/>
            <person name="Melchers K."/>
        </authorList>
    </citation>
    <scope>NUCLEOTIDE SEQUENCE [LARGE SCALE GENOMIC DNA]</scope>
    <source>
        <strain>TW-183</strain>
    </source>
</reference>
<evidence type="ECO:0000250" key="1"/>
<evidence type="ECO:0000305" key="2"/>
<sequence length="88" mass="10201">MSRSLRKGPFVDHHLLKKVRAMNIEEKKTPIKTWSRRSMITPEMIGHTFEVHNGKKFLTVFVSETMVGHKLGEFSPTRIFKSHPVKKG</sequence>
<organism>
    <name type="scientific">Chlamydia pneumoniae</name>
    <name type="common">Chlamydophila pneumoniae</name>
    <dbReference type="NCBI Taxonomy" id="83558"/>
    <lineage>
        <taxon>Bacteria</taxon>
        <taxon>Pseudomonadati</taxon>
        <taxon>Chlamydiota</taxon>
        <taxon>Chlamydiia</taxon>
        <taxon>Chlamydiales</taxon>
        <taxon>Chlamydiaceae</taxon>
        <taxon>Chlamydia/Chlamydophila group</taxon>
        <taxon>Chlamydia</taxon>
    </lineage>
</organism>
<accession>Q9Z7R1</accession>
<accession>Q9JRT8</accession>
<keyword id="KW-0687">Ribonucleoprotein</keyword>
<keyword id="KW-0689">Ribosomal protein</keyword>
<keyword id="KW-0694">RNA-binding</keyword>
<keyword id="KW-0699">rRNA-binding</keyword>
<gene>
    <name type="primary">rpsS</name>
    <name type="synonym">rs19</name>
    <name type="ordered locus">CPn_0643</name>
    <name type="ordered locus">CP_0104</name>
    <name type="ordered locus">CpB0669</name>
</gene>
<comment type="function">
    <text evidence="1">Protein S19 forms a complex with S13 that binds strongly to the 16S ribosomal RNA.</text>
</comment>
<comment type="similarity">
    <text evidence="2">Belongs to the universal ribosomal protein uS19 family.</text>
</comment>